<gene>
    <name evidence="1" type="primary">accA</name>
    <name type="ordered locus">SDY_0201</name>
</gene>
<protein>
    <recommendedName>
        <fullName evidence="1">Acetyl-coenzyme A carboxylase carboxyl transferase subunit alpha</fullName>
        <shortName evidence="1">ACCase subunit alpha</shortName>
        <shortName evidence="1">Acetyl-CoA carboxylase carboxyltransferase subunit alpha</shortName>
        <ecNumber evidence="1">2.1.3.15</ecNumber>
    </recommendedName>
</protein>
<reference key="1">
    <citation type="journal article" date="2005" name="Nucleic Acids Res.">
        <title>Genome dynamics and diversity of Shigella species, the etiologic agents of bacillary dysentery.</title>
        <authorList>
            <person name="Yang F."/>
            <person name="Yang J."/>
            <person name="Zhang X."/>
            <person name="Chen L."/>
            <person name="Jiang Y."/>
            <person name="Yan Y."/>
            <person name="Tang X."/>
            <person name="Wang J."/>
            <person name="Xiong Z."/>
            <person name="Dong J."/>
            <person name="Xue Y."/>
            <person name="Zhu Y."/>
            <person name="Xu X."/>
            <person name="Sun L."/>
            <person name="Chen S."/>
            <person name="Nie H."/>
            <person name="Peng J."/>
            <person name="Xu J."/>
            <person name="Wang Y."/>
            <person name="Yuan Z."/>
            <person name="Wen Y."/>
            <person name="Yao Z."/>
            <person name="Shen Y."/>
            <person name="Qiang B."/>
            <person name="Hou Y."/>
            <person name="Yu J."/>
            <person name="Jin Q."/>
        </authorList>
    </citation>
    <scope>NUCLEOTIDE SEQUENCE [LARGE SCALE GENOMIC DNA]</scope>
    <source>
        <strain>Sd197</strain>
    </source>
</reference>
<organism>
    <name type="scientific">Shigella dysenteriae serotype 1 (strain Sd197)</name>
    <dbReference type="NCBI Taxonomy" id="300267"/>
    <lineage>
        <taxon>Bacteria</taxon>
        <taxon>Pseudomonadati</taxon>
        <taxon>Pseudomonadota</taxon>
        <taxon>Gammaproteobacteria</taxon>
        <taxon>Enterobacterales</taxon>
        <taxon>Enterobacteriaceae</taxon>
        <taxon>Shigella</taxon>
    </lineage>
</organism>
<accession>Q32JS4</accession>
<proteinExistence type="inferred from homology"/>
<name>ACCA_SHIDS</name>
<evidence type="ECO:0000255" key="1">
    <source>
        <dbReference type="HAMAP-Rule" id="MF_00823"/>
    </source>
</evidence>
<evidence type="ECO:0000255" key="2">
    <source>
        <dbReference type="PROSITE-ProRule" id="PRU01137"/>
    </source>
</evidence>
<dbReference type="EC" id="2.1.3.15" evidence="1"/>
<dbReference type="EMBL" id="CP000034">
    <property type="protein sequence ID" value="ABB60433.1"/>
    <property type="molecule type" value="Genomic_DNA"/>
</dbReference>
<dbReference type="RefSeq" id="WP_000055741.1">
    <property type="nucleotide sequence ID" value="NC_007606.1"/>
</dbReference>
<dbReference type="RefSeq" id="YP_401922.1">
    <property type="nucleotide sequence ID" value="NC_007606.1"/>
</dbReference>
<dbReference type="SMR" id="Q32JS4"/>
<dbReference type="STRING" id="300267.SDY_0201"/>
<dbReference type="EnsemblBacteria" id="ABB60433">
    <property type="protein sequence ID" value="ABB60433"/>
    <property type="gene ID" value="SDY_0201"/>
</dbReference>
<dbReference type="GeneID" id="86945115"/>
<dbReference type="KEGG" id="sdy:SDY_0201"/>
<dbReference type="PATRIC" id="fig|300267.13.peg.232"/>
<dbReference type="HOGENOM" id="CLU_015486_0_2_6"/>
<dbReference type="UniPathway" id="UPA00655">
    <property type="reaction ID" value="UER00711"/>
</dbReference>
<dbReference type="Proteomes" id="UP000002716">
    <property type="component" value="Chromosome"/>
</dbReference>
<dbReference type="GO" id="GO:0009317">
    <property type="term" value="C:acetyl-CoA carboxylase complex"/>
    <property type="evidence" value="ECO:0007669"/>
    <property type="project" value="InterPro"/>
</dbReference>
<dbReference type="GO" id="GO:0003989">
    <property type="term" value="F:acetyl-CoA carboxylase activity"/>
    <property type="evidence" value="ECO:0007669"/>
    <property type="project" value="InterPro"/>
</dbReference>
<dbReference type="GO" id="GO:0005524">
    <property type="term" value="F:ATP binding"/>
    <property type="evidence" value="ECO:0007669"/>
    <property type="project" value="UniProtKB-KW"/>
</dbReference>
<dbReference type="GO" id="GO:0016743">
    <property type="term" value="F:carboxyl- or carbamoyltransferase activity"/>
    <property type="evidence" value="ECO:0007669"/>
    <property type="project" value="UniProtKB-UniRule"/>
</dbReference>
<dbReference type="GO" id="GO:0006633">
    <property type="term" value="P:fatty acid biosynthetic process"/>
    <property type="evidence" value="ECO:0007669"/>
    <property type="project" value="UniProtKB-KW"/>
</dbReference>
<dbReference type="GO" id="GO:2001295">
    <property type="term" value="P:malonyl-CoA biosynthetic process"/>
    <property type="evidence" value="ECO:0007669"/>
    <property type="project" value="UniProtKB-UniRule"/>
</dbReference>
<dbReference type="FunFam" id="3.90.226.10:FF:000008">
    <property type="entry name" value="Acetyl-coenzyme A carboxylase carboxyl transferase subunit alpha"/>
    <property type="match status" value="1"/>
</dbReference>
<dbReference type="Gene3D" id="3.90.226.10">
    <property type="entry name" value="2-enoyl-CoA Hydratase, Chain A, domain 1"/>
    <property type="match status" value="1"/>
</dbReference>
<dbReference type="HAMAP" id="MF_00823">
    <property type="entry name" value="AcetylCoA_CT_alpha"/>
    <property type="match status" value="1"/>
</dbReference>
<dbReference type="InterPro" id="IPR001095">
    <property type="entry name" value="Acetyl_CoA_COase_a_su"/>
</dbReference>
<dbReference type="InterPro" id="IPR029045">
    <property type="entry name" value="ClpP/crotonase-like_dom_sf"/>
</dbReference>
<dbReference type="InterPro" id="IPR011763">
    <property type="entry name" value="COA_CT_C"/>
</dbReference>
<dbReference type="NCBIfam" id="TIGR00513">
    <property type="entry name" value="accA"/>
    <property type="match status" value="1"/>
</dbReference>
<dbReference type="NCBIfam" id="NF041504">
    <property type="entry name" value="AccA_sub"/>
    <property type="match status" value="1"/>
</dbReference>
<dbReference type="NCBIfam" id="NF004344">
    <property type="entry name" value="PRK05724.1"/>
    <property type="match status" value="1"/>
</dbReference>
<dbReference type="PANTHER" id="PTHR42853">
    <property type="entry name" value="ACETYL-COENZYME A CARBOXYLASE CARBOXYL TRANSFERASE SUBUNIT ALPHA"/>
    <property type="match status" value="1"/>
</dbReference>
<dbReference type="PANTHER" id="PTHR42853:SF3">
    <property type="entry name" value="ACETYL-COENZYME A CARBOXYLASE CARBOXYL TRANSFERASE SUBUNIT ALPHA, CHLOROPLASTIC"/>
    <property type="match status" value="1"/>
</dbReference>
<dbReference type="Pfam" id="PF03255">
    <property type="entry name" value="ACCA"/>
    <property type="match status" value="1"/>
</dbReference>
<dbReference type="PRINTS" id="PR01069">
    <property type="entry name" value="ACCCTRFRASEA"/>
</dbReference>
<dbReference type="SUPFAM" id="SSF52096">
    <property type="entry name" value="ClpP/crotonase"/>
    <property type="match status" value="1"/>
</dbReference>
<dbReference type="PROSITE" id="PS50989">
    <property type="entry name" value="COA_CT_CTER"/>
    <property type="match status" value="1"/>
</dbReference>
<feature type="chain" id="PRO_0000223823" description="Acetyl-coenzyme A carboxylase carboxyl transferase subunit alpha">
    <location>
        <begin position="1"/>
        <end position="319"/>
    </location>
</feature>
<feature type="domain" description="CoA carboxyltransferase C-terminal" evidence="2">
    <location>
        <begin position="35"/>
        <end position="296"/>
    </location>
</feature>
<comment type="function">
    <text evidence="1">Component of the acetyl coenzyme A carboxylase (ACC) complex. First, biotin carboxylase catalyzes the carboxylation of biotin on its carrier protein (BCCP) and then the CO(2) group is transferred by the carboxyltransferase to acetyl-CoA to form malonyl-CoA.</text>
</comment>
<comment type="catalytic activity">
    <reaction evidence="1">
        <text>N(6)-carboxybiotinyl-L-lysyl-[protein] + acetyl-CoA = N(6)-biotinyl-L-lysyl-[protein] + malonyl-CoA</text>
        <dbReference type="Rhea" id="RHEA:54728"/>
        <dbReference type="Rhea" id="RHEA-COMP:10505"/>
        <dbReference type="Rhea" id="RHEA-COMP:10506"/>
        <dbReference type="ChEBI" id="CHEBI:57288"/>
        <dbReference type="ChEBI" id="CHEBI:57384"/>
        <dbReference type="ChEBI" id="CHEBI:83144"/>
        <dbReference type="ChEBI" id="CHEBI:83145"/>
        <dbReference type="EC" id="2.1.3.15"/>
    </reaction>
</comment>
<comment type="pathway">
    <text evidence="1">Lipid metabolism; malonyl-CoA biosynthesis; malonyl-CoA from acetyl-CoA: step 1/1.</text>
</comment>
<comment type="subunit">
    <text evidence="1">Acetyl-CoA carboxylase is a heterohexamer composed of biotin carboxyl carrier protein (AccB), biotin carboxylase (AccC) and two subunits each of ACCase subunit alpha (AccA) and ACCase subunit beta (AccD).</text>
</comment>
<comment type="subcellular location">
    <subcellularLocation>
        <location evidence="1">Cytoplasm</location>
    </subcellularLocation>
</comment>
<comment type="similarity">
    <text evidence="1">Belongs to the AccA family.</text>
</comment>
<keyword id="KW-0067">ATP-binding</keyword>
<keyword id="KW-0963">Cytoplasm</keyword>
<keyword id="KW-0275">Fatty acid biosynthesis</keyword>
<keyword id="KW-0276">Fatty acid metabolism</keyword>
<keyword id="KW-0444">Lipid biosynthesis</keyword>
<keyword id="KW-0443">Lipid metabolism</keyword>
<keyword id="KW-0547">Nucleotide-binding</keyword>
<keyword id="KW-1185">Reference proteome</keyword>
<keyword id="KW-0808">Transferase</keyword>
<sequence length="319" mass="35242">MSLNFLDFEQPIAELEAKIDSLTAVSRQDEKLDINIDEEVHRLREKSVELTRKIFADLGAWQIAQLARHPQRPYTLDYVRLAFDEFDELAGDRAYADDKAIVGGIARLDGRPVMIIGHQKGRETKEKIRRNFGMPAPEGYRKALRLMQMAERFKMPIITFIDTPGAYPGVGAEERGQSEAIARNLREMSRLGVPVVCTVIGEGGSGGALAIGVGDKVNMLQYSTYSVISPEGCASILWKSADKAPLAAEAMGIIAPRLKELKLIDSIIPEPLGGAHRNPEAMAASLKAQLLADLADLDVLSTEDLKNRRYQRLMSYGYA</sequence>